<keyword id="KW-0091">Biomineralization</keyword>
<keyword id="KW-0349">Heme</keyword>
<keyword id="KW-0408">Iron</keyword>
<keyword id="KW-1281">Magnetosome</keyword>
<keyword id="KW-0472">Membrane</keyword>
<keyword id="KW-0479">Metal-binding</keyword>
<keyword id="KW-0812">Transmembrane</keyword>
<keyword id="KW-1133">Transmembrane helix</keyword>
<organism>
    <name type="scientific">Paramagnetospirillum magneticum (strain ATCC 700264 / AMB-1)</name>
    <name type="common">Magnetospirillum magneticum</name>
    <dbReference type="NCBI Taxonomy" id="342108"/>
    <lineage>
        <taxon>Bacteria</taxon>
        <taxon>Pseudomonadati</taxon>
        <taxon>Pseudomonadota</taxon>
        <taxon>Alphaproteobacteria</taxon>
        <taxon>Rhodospirillales</taxon>
        <taxon>Magnetospirillaceae</taxon>
        <taxon>Paramagnetospirillum</taxon>
    </lineage>
</organism>
<gene>
    <name type="primary">mamX</name>
    <name type="ordered locus">amb1017</name>
</gene>
<feature type="chain" id="PRO_0000447788" description="Magnetosome protein MamX">
    <location>
        <begin position="1"/>
        <end position="271"/>
    </location>
</feature>
<feature type="topological domain" description="Cytoplasmic" evidence="5">
    <location>
        <begin position="1"/>
        <end position="10"/>
    </location>
</feature>
<feature type="transmembrane region" description="Helical" evidence="2">
    <location>
        <begin position="11"/>
        <end position="31"/>
    </location>
</feature>
<feature type="topological domain" description="Lumenal" evidence="5">
    <location>
        <begin position="32"/>
        <end position="271"/>
    </location>
</feature>
<feature type="short sequence motif" description="MCR (magnetochrome) 1" evidence="5">
    <location>
        <begin position="48"/>
        <end position="71"/>
    </location>
</feature>
<feature type="short sequence motif" description="MCR 2" evidence="5">
    <location>
        <begin position="87"/>
        <end position="110"/>
    </location>
</feature>
<feature type="binding site" description="covalent" evidence="3">
    <location>
        <position position="65"/>
    </location>
    <ligand>
        <name>heme</name>
        <dbReference type="ChEBI" id="CHEBI:30413"/>
        <label>1</label>
    </ligand>
</feature>
<feature type="binding site" description="covalent" evidence="3">
    <location>
        <position position="68"/>
    </location>
    <ligand>
        <name>heme</name>
        <dbReference type="ChEBI" id="CHEBI:30413"/>
        <label>1</label>
    </ligand>
</feature>
<feature type="binding site" description="axial binding residue" evidence="3">
    <location>
        <position position="69"/>
    </location>
    <ligand>
        <name>heme</name>
        <dbReference type="ChEBI" id="CHEBI:30413"/>
        <label>1</label>
    </ligand>
    <ligandPart>
        <name>Fe</name>
        <dbReference type="ChEBI" id="CHEBI:18248"/>
    </ligandPart>
</feature>
<feature type="binding site" description="covalent" evidence="5">
    <location>
        <position position="104"/>
    </location>
    <ligand>
        <name>heme</name>
        <dbReference type="ChEBI" id="CHEBI:30413"/>
        <label>2</label>
    </ligand>
</feature>
<feature type="binding site" description="covalent" evidence="5">
    <location>
        <position position="107"/>
    </location>
    <ligand>
        <name>heme</name>
        <dbReference type="ChEBI" id="CHEBI:30413"/>
        <label>2</label>
    </ligand>
</feature>
<feature type="binding site" description="axial binding residue" evidence="5">
    <location>
        <position position="108"/>
    </location>
    <ligand>
        <name>heme</name>
        <dbReference type="ChEBI" id="CHEBI:30413"/>
        <label>2</label>
    </ligand>
    <ligandPart>
        <name>Fe</name>
        <dbReference type="ChEBI" id="CHEBI:18248"/>
    </ligandPart>
</feature>
<evidence type="ECO:0000250" key="1">
    <source>
        <dbReference type="UniProtKB" id="V6F2C2"/>
    </source>
</evidence>
<evidence type="ECO:0000255" key="2"/>
<evidence type="ECO:0000255" key="3">
    <source>
        <dbReference type="PROSITE-ProRule" id="PRU00433"/>
    </source>
</evidence>
<evidence type="ECO:0000269" key="4">
    <source>
    </source>
</evidence>
<evidence type="ECO:0000305" key="5"/>
<sequence length="271" mass="28293">MSSKAVAHPNIAVWIMALGIAFSMALVLTAVFNANPWEDHTYDLAPPIVAGMPAPHRDGREKMVCSSCHIVTPPAIGTGPGSGTLPIVQGTPAPHVDGREKMPCASCHTIVKKGSVAKGAKAAPLPAAVTPGMPLPEAVSVALAVAPAPAAVPLGNEAHERMVPFRYQGKVVSIAGAGARSVWGDIYIQINDGINPPIWIDLAPRWYLQAEGCVVRPGMFVKGTAFRDPTQAAAGLDYAMSVMANGEICALRDNHLNGLWANAGGMDAEER</sequence>
<proteinExistence type="inferred from homology"/>
<reference key="1">
    <citation type="journal article" date="2005" name="DNA Res.">
        <title>Complete genome sequence of the facultative anaerobic magnetotactic bacterium Magnetospirillum sp. strain AMB-1.</title>
        <authorList>
            <person name="Matsunaga T."/>
            <person name="Okamura Y."/>
            <person name="Fukuda Y."/>
            <person name="Wahyudi A.T."/>
            <person name="Murase Y."/>
            <person name="Takeyama H."/>
        </authorList>
    </citation>
    <scope>NUCLEOTIDE SEQUENCE [LARGE SCALE GENOMIC DNA]</scope>
    <scope>SUBCELLULAR LOCATION</scope>
    <source>
        <strain>ATCC 700264 / AMB-1</strain>
    </source>
</reference>
<name>MAMX_PARM1</name>
<dbReference type="EMBL" id="AP007255">
    <property type="protein sequence ID" value="BAE49821.1"/>
    <property type="molecule type" value="Genomic_DNA"/>
</dbReference>
<dbReference type="SMR" id="Q2W8K4"/>
<dbReference type="STRING" id="342108.amb1017"/>
<dbReference type="KEGG" id="mag:amb1017"/>
<dbReference type="HOGENOM" id="CLU_942689_0_0_5"/>
<dbReference type="Proteomes" id="UP000007058">
    <property type="component" value="Chromosome"/>
</dbReference>
<dbReference type="GO" id="GO:0110146">
    <property type="term" value="C:magnetosome membrane"/>
    <property type="evidence" value="ECO:0000250"/>
    <property type="project" value="UniProtKB"/>
</dbReference>
<dbReference type="GO" id="GO:0046872">
    <property type="term" value="F:metal ion binding"/>
    <property type="evidence" value="ECO:0007669"/>
    <property type="project" value="UniProtKB-KW"/>
</dbReference>
<dbReference type="InterPro" id="IPR040963">
    <property type="entry name" value="MCR"/>
</dbReference>
<dbReference type="InterPro" id="IPR036280">
    <property type="entry name" value="Multihaem_cyt_sf"/>
</dbReference>
<dbReference type="NCBIfam" id="NF040996">
    <property type="entry name" value="MamX"/>
    <property type="match status" value="1"/>
</dbReference>
<dbReference type="Pfam" id="PF18509">
    <property type="entry name" value="MCR"/>
    <property type="match status" value="2"/>
</dbReference>
<dbReference type="SUPFAM" id="SSF48695">
    <property type="entry name" value="Multiheme cytochromes"/>
    <property type="match status" value="1"/>
</dbReference>
<dbReference type="PROSITE" id="PS51008">
    <property type="entry name" value="MULTIHEME_CYTC"/>
    <property type="match status" value="1"/>
</dbReference>
<protein>
    <recommendedName>
        <fullName evidence="5">Magnetosome protein MamX</fullName>
    </recommendedName>
    <alternativeName>
        <fullName evidence="5">Magnetochrome MamX</fullName>
    </alternativeName>
</protein>
<comment type="function">
    <text evidence="1">Required for correct biomineralization of the magnetosome, may be involved in redox control of biomineralization. May function with MamY, MamZ amd Mms6.</text>
</comment>
<comment type="cofactor">
    <cofactor>
        <name>heme</name>
        <dbReference type="ChEBI" id="CHEBI:30413"/>
    </cofactor>
    <text evidence="1">Binds 2 heme groups per subunit via the 2 magnetochrome (MCR) motifs.</text>
</comment>
<comment type="subcellular location">
    <subcellularLocation>
        <location evidence="4">Magnetosome membrane</location>
        <topology evidence="2">Single-pass membrane protein</topology>
    </subcellularLocation>
</comment>
<comment type="miscellaneous">
    <text evidence="5">This bacteria makes up to 20 cubo-octahedral magnetosomes of about 45 nm in diameter which contain membrane-bound crystals of magnetite (Fe(3)O(4)).</text>
</comment>
<comment type="similarity">
    <text evidence="5">Belongs to the magnetosome MamX family.</text>
</comment>
<accession>Q2W8K4</accession>